<keyword id="KW-0002">3D-structure</keyword>
<keyword id="KW-0966">Cell projection</keyword>
<keyword id="KW-0969">Cilium</keyword>
<keyword id="KW-0963">Cytoplasm</keyword>
<keyword id="KW-0206">Cytoskeleton</keyword>
<keyword id="KW-0221">Differentiation</keyword>
<keyword id="KW-0282">Flagellum</keyword>
<keyword id="KW-0496">Mitochondrion</keyword>
<keyword id="KW-0539">Nucleus</keyword>
<keyword id="KW-1185">Reference proteome</keyword>
<keyword id="KW-0744">Spermatogenesis</keyword>
<accession>Q32KP0</accession>
<sequence length="304" mass="35066">MFLFSRKTKTPISTYSDSYRAPTSIKEVYKDPPLWAWEANKFVTPGLTHTAQRHVDPDALQKMLKCAVQDYSYKGSIPSHPYFPEKYWLCPEEADRCNPNYLCGNPNYLCSNQYNTWRMGPYNCWNKCTTYLPRLPKEAGMETVVRGMPLVYPPKPERLNAYEREVVVNMLNSLSRNQPLPQITPRCGCVDPLPGRLPFQGYESACSGRHYCLRGMDYCVSGPPCTERRLRPLCTELPTVRSVSPCEHRSGMQCAVITPQPSYYPCPNLRWDTSHFKKTGGSQRNNYVVHPEFVSETYPDYHCW</sequence>
<protein>
    <recommendedName>
        <fullName>Sperm microtubule inner protein 6</fullName>
    </recommendedName>
    <alternativeName>
        <fullName>Ciliated bronchial epithelial protein 1</fullName>
    </alternativeName>
    <alternativeName>
        <fullName>Spermatid-specific manchette-related protein 1</fullName>
    </alternativeName>
    <alternativeName>
        <fullName>Testis development protein NYD-SP22</fullName>
    </alternativeName>
</protein>
<proteinExistence type="evidence at protein level"/>
<dbReference type="EMBL" id="BC109997">
    <property type="protein sequence ID" value="AAI09998.1"/>
    <property type="molecule type" value="mRNA"/>
</dbReference>
<dbReference type="RefSeq" id="NP_001069708.1">
    <property type="nucleotide sequence ID" value="NM_001076240.2"/>
</dbReference>
<dbReference type="PDB" id="8OTZ">
    <property type="method" value="EM"/>
    <property type="resolution" value="3.60 A"/>
    <property type="chains" value="B0/B1/B2/B3/B4/B8/B9/CQ/CR/CS=1-304"/>
</dbReference>
<dbReference type="PDBsum" id="8OTZ"/>
<dbReference type="EMDB" id="EMD-17187"/>
<dbReference type="EMDB" id="EMD-50664"/>
<dbReference type="SMR" id="Q32KP0"/>
<dbReference type="FunCoup" id="Q32KP0">
    <property type="interactions" value="246"/>
</dbReference>
<dbReference type="STRING" id="9913.ENSBTAP00000058594"/>
<dbReference type="PaxDb" id="9913-ENSBTAP00000011027"/>
<dbReference type="Ensembl" id="ENSBTAT00000011027.7">
    <property type="protein sequence ID" value="ENSBTAP00000011027.5"/>
    <property type="gene ID" value="ENSBTAG00000008376.7"/>
</dbReference>
<dbReference type="GeneID" id="540767"/>
<dbReference type="KEGG" id="bta:540767"/>
<dbReference type="CTD" id="84688"/>
<dbReference type="VEuPathDB" id="HostDB:ENSBTAG00000008376"/>
<dbReference type="eggNOG" id="ENOG502QRFQ">
    <property type="taxonomic scope" value="Eukaryota"/>
</dbReference>
<dbReference type="GeneTree" id="ENSGT00940000161008"/>
<dbReference type="HOGENOM" id="CLU_093197_0_0_1"/>
<dbReference type="InParanoid" id="Q32KP0"/>
<dbReference type="OrthoDB" id="10070917at2759"/>
<dbReference type="TreeFam" id="TF335656"/>
<dbReference type="Proteomes" id="UP000009136">
    <property type="component" value="Chromosome 8"/>
</dbReference>
<dbReference type="Bgee" id="ENSBTAG00000008376">
    <property type="expression patterns" value="Expressed in semen and 106 other cell types or tissues"/>
</dbReference>
<dbReference type="GO" id="GO:0005737">
    <property type="term" value="C:cytoplasm"/>
    <property type="evidence" value="ECO:0000250"/>
    <property type="project" value="UniProtKB"/>
</dbReference>
<dbReference type="GO" id="GO:0002177">
    <property type="term" value="C:manchette"/>
    <property type="evidence" value="ECO:0000250"/>
    <property type="project" value="UniProtKB"/>
</dbReference>
<dbReference type="GO" id="GO:0005739">
    <property type="term" value="C:mitochondrion"/>
    <property type="evidence" value="ECO:0000250"/>
    <property type="project" value="UniProtKB"/>
</dbReference>
<dbReference type="GO" id="GO:0005634">
    <property type="term" value="C:nucleus"/>
    <property type="evidence" value="ECO:0000250"/>
    <property type="project" value="UniProtKB"/>
</dbReference>
<dbReference type="GO" id="GO:0048471">
    <property type="term" value="C:perinuclear region of cytoplasm"/>
    <property type="evidence" value="ECO:0000250"/>
    <property type="project" value="UniProtKB"/>
</dbReference>
<dbReference type="GO" id="GO:0097225">
    <property type="term" value="C:sperm midpiece"/>
    <property type="evidence" value="ECO:0000250"/>
    <property type="project" value="UniProtKB"/>
</dbReference>
<dbReference type="GO" id="GO:0043014">
    <property type="term" value="F:alpha-tubulin binding"/>
    <property type="evidence" value="ECO:0000318"/>
    <property type="project" value="GO_Central"/>
</dbReference>
<dbReference type="GO" id="GO:0030154">
    <property type="term" value="P:cell differentiation"/>
    <property type="evidence" value="ECO:0007669"/>
    <property type="project" value="UniProtKB-KW"/>
</dbReference>
<dbReference type="GO" id="GO:0007283">
    <property type="term" value="P:spermatogenesis"/>
    <property type="evidence" value="ECO:0007669"/>
    <property type="project" value="UniProtKB-KW"/>
</dbReference>
<dbReference type="InterPro" id="IPR028195">
    <property type="entry name" value="SPMIP6"/>
</dbReference>
<dbReference type="PANTHER" id="PTHR35664">
    <property type="entry name" value="SPERMATID-SPECIFIC MANCHETTE-RELATED PROTEIN 1"/>
    <property type="match status" value="1"/>
</dbReference>
<dbReference type="PANTHER" id="PTHR35664:SF1">
    <property type="entry name" value="SPERMATID-SPECIFIC MANCHETTE-RELATED PROTEIN 1"/>
    <property type="match status" value="1"/>
</dbReference>
<dbReference type="Pfam" id="PF15181">
    <property type="entry name" value="SMRP1"/>
    <property type="match status" value="1"/>
</dbReference>
<comment type="function">
    <text evidence="1">May participate in intramanchette transport and midpiece formation of the sperm tail. May play a potential role in somatic cell proliferation.</text>
</comment>
<comment type="subunit">
    <text evidence="1 3">Microtubule inner protein component of sperm flagellar doublet microtubules (PubMed:37327785). Interacts with alpha-tubulin (By similarity).</text>
</comment>
<comment type="subcellular location">
    <subcellularLocation>
        <location evidence="1">Cytoplasm</location>
        <location evidence="1">Cytoskeleton</location>
    </subcellularLocation>
    <subcellularLocation>
        <location evidence="2">Nucleus</location>
    </subcellularLocation>
    <subcellularLocation>
        <location evidence="1">Cytoplasm</location>
    </subcellularLocation>
    <subcellularLocation>
        <location evidence="1">Mitochondrion</location>
    </subcellularLocation>
    <subcellularLocation>
        <location evidence="3">Cytoplasm</location>
        <location evidence="3">Cytoskeleton</location>
        <location evidence="3">Flagellum axoneme</location>
    </subcellularLocation>
    <text evidence="1 2">During spermatid elongation (step 10), localizes along the length of the manchette and later during the elongation process only at the distal ends of spermatid manchette (step 12). In late elongated spermatids (step 16), in the final steps of spermiogenesis, localization is restricted to the midpiece of the flagellum. Localizes at the contractile ring in dividing cells (By similarity). Predominantly perinuclear in bronchial epithelial cells but also detected in the nucleus in some primary epithelial cells and in a number of cell lines (By similarity).</text>
</comment>
<comment type="similarity">
    <text evidence="4">Belongs to the SPMIP6 family.</text>
</comment>
<name>SMIP6_BOVIN</name>
<gene>
    <name type="primary">SPMIP6</name>
    <name type="synonym">CBE1</name>
    <name type="synonym">SMRP1</name>
</gene>
<feature type="chain" id="PRO_0000296257" description="Sperm microtubule inner protein 6">
    <location>
        <begin position="1"/>
        <end position="304"/>
    </location>
</feature>
<evidence type="ECO:0000250" key="1">
    <source>
        <dbReference type="UniProtKB" id="Q2MH31"/>
    </source>
</evidence>
<evidence type="ECO:0000250" key="2">
    <source>
        <dbReference type="UniProtKB" id="Q8NCR6"/>
    </source>
</evidence>
<evidence type="ECO:0000269" key="3">
    <source>
    </source>
</evidence>
<evidence type="ECO:0000305" key="4"/>
<evidence type="ECO:0007744" key="5">
    <source>
        <dbReference type="PDB" id="8OTZ"/>
    </source>
</evidence>
<organism>
    <name type="scientific">Bos taurus</name>
    <name type="common">Bovine</name>
    <dbReference type="NCBI Taxonomy" id="9913"/>
    <lineage>
        <taxon>Eukaryota</taxon>
        <taxon>Metazoa</taxon>
        <taxon>Chordata</taxon>
        <taxon>Craniata</taxon>
        <taxon>Vertebrata</taxon>
        <taxon>Euteleostomi</taxon>
        <taxon>Mammalia</taxon>
        <taxon>Eutheria</taxon>
        <taxon>Laurasiatheria</taxon>
        <taxon>Artiodactyla</taxon>
        <taxon>Ruminantia</taxon>
        <taxon>Pecora</taxon>
        <taxon>Bovidae</taxon>
        <taxon>Bovinae</taxon>
        <taxon>Bos</taxon>
    </lineage>
</organism>
<reference key="1">
    <citation type="submission" date="2005-11" db="EMBL/GenBank/DDBJ databases">
        <authorList>
            <consortium name="NIH - Mammalian Gene Collection (MGC) project"/>
        </authorList>
    </citation>
    <scope>NUCLEOTIDE SEQUENCE [LARGE SCALE MRNA]</scope>
    <source>
        <strain>Crossbred X Angus</strain>
        <tissue>Liver</tissue>
    </source>
</reference>
<reference evidence="5" key="2">
    <citation type="journal article" date="2023" name="Cell">
        <title>Structural specializations of the sperm tail.</title>
        <authorList>
            <person name="Leung M.R."/>
            <person name="Zeng J."/>
            <person name="Wang X."/>
            <person name="Roelofs M.C."/>
            <person name="Huang W."/>
            <person name="Zenezini Chiozzi R."/>
            <person name="Hevler J.F."/>
            <person name="Heck A.J.R."/>
            <person name="Dutcher S.K."/>
            <person name="Brown A."/>
            <person name="Zhang R."/>
            <person name="Zeev-Ben-Mordehai T."/>
        </authorList>
    </citation>
    <scope>STRUCTURE BY ELECTRON MICROSCOPY (3.60 ANGSTROMS)</scope>
    <scope>SUBUNIT</scope>
    <scope>SUBCELLULAR LOCATION</scope>
</reference>